<gene>
    <name evidence="1" type="primary">smpB</name>
    <name type="ordered locus">CTC_00385</name>
</gene>
<accession>Q898Q7</accession>
<reference key="1">
    <citation type="journal article" date="2003" name="Proc. Natl. Acad. Sci. U.S.A.">
        <title>The genome sequence of Clostridium tetani, the causative agent of tetanus disease.</title>
        <authorList>
            <person name="Brueggemann H."/>
            <person name="Baeumer S."/>
            <person name="Fricke W.F."/>
            <person name="Wiezer A."/>
            <person name="Liesegang H."/>
            <person name="Decker I."/>
            <person name="Herzberg C."/>
            <person name="Martinez-Arias R."/>
            <person name="Merkl R."/>
            <person name="Henne A."/>
            <person name="Gottschalk G."/>
        </authorList>
    </citation>
    <scope>NUCLEOTIDE SEQUENCE [LARGE SCALE GENOMIC DNA]</scope>
    <source>
        <strain>Massachusetts / E88</strain>
    </source>
</reference>
<feature type="chain" id="PRO_0000102936" description="SsrA-binding protein">
    <location>
        <begin position="1"/>
        <end position="156"/>
    </location>
</feature>
<sequence>MVKGRSNKTLAENRKARHDYFVEEAYEAGIELVGTEVKSIREGKANLKDSYAEIRNGEVFLRNMHVSPYEQGNIFNKDPLRDRKLLLHKMQILKLTAYTTQQGYTLIPLSLYLKNGRVKVNLAVAKGKKNYDKRQDLIEKAAKRDIERELKDRSRY</sequence>
<dbReference type="EMBL" id="AE015927">
    <property type="protein sequence ID" value="AAO35022.1"/>
    <property type="molecule type" value="Genomic_DNA"/>
</dbReference>
<dbReference type="RefSeq" id="WP_011098693.1">
    <property type="nucleotide sequence ID" value="NC_004557.1"/>
</dbReference>
<dbReference type="SMR" id="Q898Q7"/>
<dbReference type="STRING" id="212717.CTC_00385"/>
<dbReference type="GeneID" id="24254376"/>
<dbReference type="KEGG" id="ctc:CTC_00385"/>
<dbReference type="HOGENOM" id="CLU_108953_0_0_9"/>
<dbReference type="OrthoDB" id="9805462at2"/>
<dbReference type="Proteomes" id="UP000001412">
    <property type="component" value="Chromosome"/>
</dbReference>
<dbReference type="GO" id="GO:0005829">
    <property type="term" value="C:cytosol"/>
    <property type="evidence" value="ECO:0007669"/>
    <property type="project" value="TreeGrafter"/>
</dbReference>
<dbReference type="GO" id="GO:0003723">
    <property type="term" value="F:RNA binding"/>
    <property type="evidence" value="ECO:0007669"/>
    <property type="project" value="UniProtKB-UniRule"/>
</dbReference>
<dbReference type="GO" id="GO:0070929">
    <property type="term" value="P:trans-translation"/>
    <property type="evidence" value="ECO:0007669"/>
    <property type="project" value="UniProtKB-UniRule"/>
</dbReference>
<dbReference type="CDD" id="cd09294">
    <property type="entry name" value="SmpB"/>
    <property type="match status" value="1"/>
</dbReference>
<dbReference type="Gene3D" id="2.40.280.10">
    <property type="match status" value="1"/>
</dbReference>
<dbReference type="HAMAP" id="MF_00023">
    <property type="entry name" value="SmpB"/>
    <property type="match status" value="1"/>
</dbReference>
<dbReference type="InterPro" id="IPR023620">
    <property type="entry name" value="SmpB"/>
</dbReference>
<dbReference type="InterPro" id="IPR000037">
    <property type="entry name" value="SsrA-bd_prot"/>
</dbReference>
<dbReference type="InterPro" id="IPR020081">
    <property type="entry name" value="SsrA-bd_prot_CS"/>
</dbReference>
<dbReference type="NCBIfam" id="NF003843">
    <property type="entry name" value="PRK05422.1"/>
    <property type="match status" value="1"/>
</dbReference>
<dbReference type="NCBIfam" id="TIGR00086">
    <property type="entry name" value="smpB"/>
    <property type="match status" value="1"/>
</dbReference>
<dbReference type="PANTHER" id="PTHR30308:SF2">
    <property type="entry name" value="SSRA-BINDING PROTEIN"/>
    <property type="match status" value="1"/>
</dbReference>
<dbReference type="PANTHER" id="PTHR30308">
    <property type="entry name" value="TMRNA-BINDING COMPONENT OF TRANS-TRANSLATION TAGGING COMPLEX"/>
    <property type="match status" value="1"/>
</dbReference>
<dbReference type="Pfam" id="PF01668">
    <property type="entry name" value="SmpB"/>
    <property type="match status" value="1"/>
</dbReference>
<dbReference type="SUPFAM" id="SSF74982">
    <property type="entry name" value="Small protein B (SmpB)"/>
    <property type="match status" value="1"/>
</dbReference>
<dbReference type="PROSITE" id="PS01317">
    <property type="entry name" value="SSRP"/>
    <property type="match status" value="1"/>
</dbReference>
<protein>
    <recommendedName>
        <fullName evidence="1">SsrA-binding protein</fullName>
    </recommendedName>
    <alternativeName>
        <fullName evidence="1">Small protein B</fullName>
    </alternativeName>
</protein>
<evidence type="ECO:0000255" key="1">
    <source>
        <dbReference type="HAMAP-Rule" id="MF_00023"/>
    </source>
</evidence>
<organism>
    <name type="scientific">Clostridium tetani (strain Massachusetts / E88)</name>
    <dbReference type="NCBI Taxonomy" id="212717"/>
    <lineage>
        <taxon>Bacteria</taxon>
        <taxon>Bacillati</taxon>
        <taxon>Bacillota</taxon>
        <taxon>Clostridia</taxon>
        <taxon>Eubacteriales</taxon>
        <taxon>Clostridiaceae</taxon>
        <taxon>Clostridium</taxon>
    </lineage>
</organism>
<comment type="function">
    <text evidence="1">Required for rescue of stalled ribosomes mediated by trans-translation. Binds to transfer-messenger RNA (tmRNA), required for stable association of tmRNA with ribosomes. tmRNA and SmpB together mimic tRNA shape, replacing the anticodon stem-loop with SmpB. tmRNA is encoded by the ssrA gene; the 2 termini fold to resemble tRNA(Ala) and it encodes a 'tag peptide', a short internal open reading frame. During trans-translation Ala-aminoacylated tmRNA acts like a tRNA, entering the A-site of stalled ribosomes, displacing the stalled mRNA. The ribosome then switches to translate the ORF on the tmRNA; the nascent peptide is terminated with the 'tag peptide' encoded by the tmRNA and targeted for degradation. The ribosome is freed to recommence translation, which seems to be the essential function of trans-translation.</text>
</comment>
<comment type="subcellular location">
    <subcellularLocation>
        <location evidence="1">Cytoplasm</location>
    </subcellularLocation>
    <text evidence="1">The tmRNA-SmpB complex associates with stalled 70S ribosomes.</text>
</comment>
<comment type="similarity">
    <text evidence="1">Belongs to the SmpB family.</text>
</comment>
<name>SSRP_CLOTE</name>
<keyword id="KW-0963">Cytoplasm</keyword>
<keyword id="KW-1185">Reference proteome</keyword>
<keyword id="KW-0694">RNA-binding</keyword>
<proteinExistence type="inferred from homology"/>